<reference key="1">
    <citation type="journal article" date="2002" name="Proc. Natl. Acad. Sci. U.S.A.">
        <title>The genome sequence of Bifidobacterium longum reflects its adaptation to the human gastrointestinal tract.</title>
        <authorList>
            <person name="Schell M.A."/>
            <person name="Karmirantzou M."/>
            <person name="Snel B."/>
            <person name="Vilanova D."/>
            <person name="Berger B."/>
            <person name="Pessi G."/>
            <person name="Zwahlen M.-C."/>
            <person name="Desiere F."/>
            <person name="Bork P."/>
            <person name="Delley M."/>
            <person name="Pridmore R.D."/>
            <person name="Arigoni F."/>
        </authorList>
    </citation>
    <scope>NUCLEOTIDE SEQUENCE [LARGE SCALE GENOMIC DNA]</scope>
    <source>
        <strain>NCC 2705</strain>
    </source>
</reference>
<name>OBG_BIFLO</name>
<keyword id="KW-0963">Cytoplasm</keyword>
<keyword id="KW-0342">GTP-binding</keyword>
<keyword id="KW-0378">Hydrolase</keyword>
<keyword id="KW-0460">Magnesium</keyword>
<keyword id="KW-0479">Metal-binding</keyword>
<keyword id="KW-0547">Nucleotide-binding</keyword>
<keyword id="KW-1185">Reference proteome</keyword>
<accession>Q8G4U0</accession>
<feature type="chain" id="PRO_0000385744" description="GTPase Obg">
    <location>
        <begin position="1"/>
        <end position="563"/>
    </location>
</feature>
<feature type="domain" description="Obg" evidence="3">
    <location>
        <begin position="2"/>
        <end position="168"/>
    </location>
</feature>
<feature type="domain" description="OBG-type G" evidence="1">
    <location>
        <begin position="169"/>
        <end position="349"/>
    </location>
</feature>
<feature type="domain" description="OCT" evidence="2">
    <location>
        <begin position="383"/>
        <end position="469"/>
    </location>
</feature>
<feature type="region of interest" description="Disordered" evidence="4">
    <location>
        <begin position="529"/>
        <end position="563"/>
    </location>
</feature>
<feature type="binding site" evidence="1">
    <location>
        <begin position="175"/>
        <end position="182"/>
    </location>
    <ligand>
        <name>GTP</name>
        <dbReference type="ChEBI" id="CHEBI:37565"/>
    </ligand>
</feature>
<feature type="binding site" evidence="1">
    <location>
        <position position="182"/>
    </location>
    <ligand>
        <name>Mg(2+)</name>
        <dbReference type="ChEBI" id="CHEBI:18420"/>
    </ligand>
</feature>
<feature type="binding site" evidence="1">
    <location>
        <begin position="200"/>
        <end position="204"/>
    </location>
    <ligand>
        <name>GTP</name>
        <dbReference type="ChEBI" id="CHEBI:37565"/>
    </ligand>
</feature>
<feature type="binding site" evidence="1">
    <location>
        <position position="202"/>
    </location>
    <ligand>
        <name>Mg(2+)</name>
        <dbReference type="ChEBI" id="CHEBI:18420"/>
    </ligand>
</feature>
<feature type="binding site" evidence="1">
    <location>
        <begin position="221"/>
        <end position="224"/>
    </location>
    <ligand>
        <name>GTP</name>
        <dbReference type="ChEBI" id="CHEBI:37565"/>
    </ligand>
</feature>
<feature type="binding site" evidence="1">
    <location>
        <begin position="301"/>
        <end position="304"/>
    </location>
    <ligand>
        <name>GTP</name>
        <dbReference type="ChEBI" id="CHEBI:37565"/>
    </ligand>
</feature>
<feature type="binding site" evidence="1">
    <location>
        <begin position="330"/>
        <end position="332"/>
    </location>
    <ligand>
        <name>GTP</name>
        <dbReference type="ChEBI" id="CHEBI:37565"/>
    </ligand>
</feature>
<comment type="function">
    <text evidence="1">An essential GTPase which binds GTP, GDP and possibly (p)ppGpp with moderate affinity, with high nucleotide exchange rates and a fairly low GTP hydrolysis rate. Plays a role in control of the cell cycle, stress response, ribosome biogenesis and in those bacteria that undergo differentiation, in morphogenesis control.</text>
</comment>
<comment type="cofactor">
    <cofactor evidence="1">
        <name>Mg(2+)</name>
        <dbReference type="ChEBI" id="CHEBI:18420"/>
    </cofactor>
</comment>
<comment type="subunit">
    <text evidence="1">Monomer.</text>
</comment>
<comment type="subcellular location">
    <subcellularLocation>
        <location evidence="1">Cytoplasm</location>
    </subcellularLocation>
</comment>
<comment type="similarity">
    <text evidence="1">Belongs to the TRAFAC class OBG-HflX-like GTPase superfamily. OBG GTPase family.</text>
</comment>
<dbReference type="EC" id="3.6.5.-" evidence="1"/>
<dbReference type="EMBL" id="AE014295">
    <property type="protein sequence ID" value="AAN25085.1"/>
    <property type="molecule type" value="Genomic_DNA"/>
</dbReference>
<dbReference type="RefSeq" id="NP_696449.1">
    <property type="nucleotide sequence ID" value="NC_004307.2"/>
</dbReference>
<dbReference type="SMR" id="Q8G4U0"/>
<dbReference type="STRING" id="206672.BL1284"/>
<dbReference type="EnsemblBacteria" id="AAN25085">
    <property type="protein sequence ID" value="AAN25085"/>
    <property type="gene ID" value="BL1284"/>
</dbReference>
<dbReference type="KEGG" id="blo:BL1284"/>
<dbReference type="PATRIC" id="fig|206672.9.peg.1571"/>
<dbReference type="HOGENOM" id="CLU_011747_1_0_11"/>
<dbReference type="OrthoDB" id="9807318at2"/>
<dbReference type="PhylomeDB" id="Q8G4U0"/>
<dbReference type="Proteomes" id="UP000000439">
    <property type="component" value="Chromosome"/>
</dbReference>
<dbReference type="GO" id="GO:0005737">
    <property type="term" value="C:cytoplasm"/>
    <property type="evidence" value="ECO:0007669"/>
    <property type="project" value="UniProtKB-SubCell"/>
</dbReference>
<dbReference type="GO" id="GO:0005525">
    <property type="term" value="F:GTP binding"/>
    <property type="evidence" value="ECO:0007669"/>
    <property type="project" value="UniProtKB-UniRule"/>
</dbReference>
<dbReference type="GO" id="GO:0003924">
    <property type="term" value="F:GTPase activity"/>
    <property type="evidence" value="ECO:0007669"/>
    <property type="project" value="UniProtKB-UniRule"/>
</dbReference>
<dbReference type="GO" id="GO:0000287">
    <property type="term" value="F:magnesium ion binding"/>
    <property type="evidence" value="ECO:0007669"/>
    <property type="project" value="InterPro"/>
</dbReference>
<dbReference type="GO" id="GO:0042254">
    <property type="term" value="P:ribosome biogenesis"/>
    <property type="evidence" value="ECO:0007669"/>
    <property type="project" value="UniProtKB-UniRule"/>
</dbReference>
<dbReference type="CDD" id="cd01898">
    <property type="entry name" value="Obg"/>
    <property type="match status" value="1"/>
</dbReference>
<dbReference type="FunFam" id="2.70.210.12:FF:000001">
    <property type="entry name" value="GTPase Obg"/>
    <property type="match status" value="1"/>
</dbReference>
<dbReference type="Gene3D" id="3.30.300.350">
    <property type="entry name" value="GTP-binding protein OBG, C-terminal domain"/>
    <property type="match status" value="1"/>
</dbReference>
<dbReference type="Gene3D" id="2.70.210.12">
    <property type="entry name" value="GTP1/OBG domain"/>
    <property type="match status" value="1"/>
</dbReference>
<dbReference type="Gene3D" id="3.40.50.300">
    <property type="entry name" value="P-loop containing nucleotide triphosphate hydrolases"/>
    <property type="match status" value="1"/>
</dbReference>
<dbReference type="HAMAP" id="MF_01454">
    <property type="entry name" value="GTPase_Obg"/>
    <property type="match status" value="1"/>
</dbReference>
<dbReference type="InterPro" id="IPR031167">
    <property type="entry name" value="G_OBG"/>
</dbReference>
<dbReference type="InterPro" id="IPR006073">
    <property type="entry name" value="GTP-bd"/>
</dbReference>
<dbReference type="InterPro" id="IPR014100">
    <property type="entry name" value="GTP-bd_Obg/CgtA"/>
</dbReference>
<dbReference type="InterPro" id="IPR036346">
    <property type="entry name" value="GTP-bd_prot_GTP1/OBG_C_sf"/>
</dbReference>
<dbReference type="InterPro" id="IPR006074">
    <property type="entry name" value="GTP1-OBG_CS"/>
</dbReference>
<dbReference type="InterPro" id="IPR006169">
    <property type="entry name" value="GTP1_OBG_dom"/>
</dbReference>
<dbReference type="InterPro" id="IPR036726">
    <property type="entry name" value="GTP1_OBG_dom_sf"/>
</dbReference>
<dbReference type="InterPro" id="IPR045086">
    <property type="entry name" value="OBG_GTPase"/>
</dbReference>
<dbReference type="InterPro" id="IPR015349">
    <property type="entry name" value="OCT_dom"/>
</dbReference>
<dbReference type="InterPro" id="IPR027417">
    <property type="entry name" value="P-loop_NTPase"/>
</dbReference>
<dbReference type="NCBIfam" id="TIGR02729">
    <property type="entry name" value="Obg_CgtA"/>
    <property type="match status" value="1"/>
</dbReference>
<dbReference type="NCBIfam" id="TIGR03595">
    <property type="entry name" value="Obg_CgtA_exten"/>
    <property type="match status" value="1"/>
</dbReference>
<dbReference type="NCBIfam" id="NF008954">
    <property type="entry name" value="PRK12296.1"/>
    <property type="match status" value="1"/>
</dbReference>
<dbReference type="NCBIfam" id="NF008955">
    <property type="entry name" value="PRK12297.1"/>
    <property type="match status" value="1"/>
</dbReference>
<dbReference type="NCBIfam" id="NF008956">
    <property type="entry name" value="PRK12299.1"/>
    <property type="match status" value="1"/>
</dbReference>
<dbReference type="PANTHER" id="PTHR11702">
    <property type="entry name" value="DEVELOPMENTALLY REGULATED GTP-BINDING PROTEIN-RELATED"/>
    <property type="match status" value="1"/>
</dbReference>
<dbReference type="PANTHER" id="PTHR11702:SF31">
    <property type="entry name" value="MITOCHONDRIAL RIBOSOME-ASSOCIATED GTPASE 2"/>
    <property type="match status" value="1"/>
</dbReference>
<dbReference type="Pfam" id="PF09269">
    <property type="entry name" value="DUF1967"/>
    <property type="match status" value="1"/>
</dbReference>
<dbReference type="Pfam" id="PF01018">
    <property type="entry name" value="GTP1_OBG"/>
    <property type="match status" value="1"/>
</dbReference>
<dbReference type="Pfam" id="PF01926">
    <property type="entry name" value="MMR_HSR1"/>
    <property type="match status" value="1"/>
</dbReference>
<dbReference type="PRINTS" id="PR00326">
    <property type="entry name" value="GTP1OBG"/>
</dbReference>
<dbReference type="SUPFAM" id="SSF102741">
    <property type="entry name" value="Obg GTP-binding protein C-terminal domain"/>
    <property type="match status" value="1"/>
</dbReference>
<dbReference type="SUPFAM" id="SSF82051">
    <property type="entry name" value="Obg GTP-binding protein N-terminal domain"/>
    <property type="match status" value="1"/>
</dbReference>
<dbReference type="SUPFAM" id="SSF52540">
    <property type="entry name" value="P-loop containing nucleoside triphosphate hydrolases"/>
    <property type="match status" value="1"/>
</dbReference>
<dbReference type="PROSITE" id="PS51710">
    <property type="entry name" value="G_OBG"/>
    <property type="match status" value="1"/>
</dbReference>
<dbReference type="PROSITE" id="PS00905">
    <property type="entry name" value="GTP1_OBG"/>
    <property type="match status" value="1"/>
</dbReference>
<dbReference type="PROSITE" id="PS51883">
    <property type="entry name" value="OBG"/>
    <property type="match status" value="1"/>
</dbReference>
<dbReference type="PROSITE" id="PS51881">
    <property type="entry name" value="OCT"/>
    <property type="match status" value="1"/>
</dbReference>
<protein>
    <recommendedName>
        <fullName evidence="1">GTPase Obg</fullName>
        <ecNumber evidence="1">3.6.5.-</ecNumber>
    </recommendedName>
    <alternativeName>
        <fullName evidence="1">GTP-binding protein Obg</fullName>
    </alternativeName>
</protein>
<proteinExistence type="inferred from homology"/>
<evidence type="ECO:0000255" key="1">
    <source>
        <dbReference type="HAMAP-Rule" id="MF_01454"/>
    </source>
</evidence>
<evidence type="ECO:0000255" key="2">
    <source>
        <dbReference type="PROSITE-ProRule" id="PRU01229"/>
    </source>
</evidence>
<evidence type="ECO:0000255" key="3">
    <source>
        <dbReference type="PROSITE-ProRule" id="PRU01231"/>
    </source>
</evidence>
<evidence type="ECO:0000256" key="4">
    <source>
        <dbReference type="SAM" id="MobiDB-lite"/>
    </source>
</evidence>
<sequence length="563" mass="61123">MSDFVDRVTVHVKGGDGGNGSAGIRREKYKPLAGPNGGNGGDGGSVVFVADRNATSLLDYRFMPHRVAGSGTMGLGDNKDGSKGEDLILPVPCGTVVFEARGEQGKAKHPGAQLADLRHEGDRCVVAQGGAGGLGNIALANKTRRAPGFALLGELGEERDVILELKSIADVALVGFPSAGKSSLIAAMSSAKPKIADYPFTTLVPNLGVVIAGDSRYTIADVPGLIPGASEGKGLGLEFLRHIERTEIIAHVIDCATLEPDRDPMSDYHALENELALYADKLELPLGAIPIPERPRIVILNKIDVPEAKELAEFVRPEFEKLGLKVFEISTASHEGLKELNFALSALVHEMREEVANREQAEEEARVVIKPLETKGRRPRRADEGGSALEFTVERRELGNGEVFFEVRGVKPERWVMQTNFDNDEAVGYLADRLAKLGVEDELRRKGAHPGDEVRIGRGARMVEFDWDPTISAGAEMLDGSNLGARGKDLRLEELDPRTHRRSNAERRAQYHEMMDARAAVRDAMMAERKAGHWADPTVDDDRHDETSLFGHGESSEDGETEE</sequence>
<gene>
    <name evidence="1" type="primary">obg</name>
    <name type="ordered locus">BL1284</name>
</gene>
<organism>
    <name type="scientific">Bifidobacterium longum (strain NCC 2705)</name>
    <dbReference type="NCBI Taxonomy" id="206672"/>
    <lineage>
        <taxon>Bacteria</taxon>
        <taxon>Bacillati</taxon>
        <taxon>Actinomycetota</taxon>
        <taxon>Actinomycetes</taxon>
        <taxon>Bifidobacteriales</taxon>
        <taxon>Bifidobacteriaceae</taxon>
        <taxon>Bifidobacterium</taxon>
    </lineage>
</organism>